<comment type="function">
    <text evidence="2">With S4 and S5 plays an important role in translational accuracy.</text>
</comment>
<comment type="function">
    <text evidence="2">Interacts with and stabilizes bases of the 16S rRNA that are involved in tRNA selection in the A site and with the mRNA backbone. Located at the interface of the 30S and 50S subunits, it traverses the body of the 30S subunit contacting proteins on the other side and probably holding the rRNA structure together. The combined cluster of proteins S8, S12 and S17 appears to hold together the shoulder and platform of the 30S subunit.</text>
</comment>
<comment type="subunit">
    <text evidence="2">Part of the 30S ribosomal subunit. Contacts proteins S8 and S17. May interact with IF1 in the 30S initiation complex.</text>
</comment>
<comment type="similarity">
    <text evidence="2">Belongs to the universal ribosomal protein uS12 family.</text>
</comment>
<organism>
    <name type="scientific">Rhodopseudomonas palustris (strain HaA2)</name>
    <dbReference type="NCBI Taxonomy" id="316058"/>
    <lineage>
        <taxon>Bacteria</taxon>
        <taxon>Pseudomonadati</taxon>
        <taxon>Pseudomonadota</taxon>
        <taxon>Alphaproteobacteria</taxon>
        <taxon>Hyphomicrobiales</taxon>
        <taxon>Nitrobacteraceae</taxon>
        <taxon>Rhodopseudomonas</taxon>
    </lineage>
</organism>
<evidence type="ECO:0000250" key="1"/>
<evidence type="ECO:0000255" key="2">
    <source>
        <dbReference type="HAMAP-Rule" id="MF_00403"/>
    </source>
</evidence>
<evidence type="ECO:0000305" key="3"/>
<accession>Q2IXR5</accession>
<feature type="chain" id="PRO_0000263584" description="Small ribosomal subunit protein uS12">
    <location>
        <begin position="1"/>
        <end position="123"/>
    </location>
</feature>
<feature type="modified residue" description="3-methylthioaspartic acid" evidence="1">
    <location>
        <position position="89"/>
    </location>
</feature>
<gene>
    <name evidence="2" type="primary">rpsL</name>
    <name type="ordered locus">RPB_2290</name>
</gene>
<protein>
    <recommendedName>
        <fullName evidence="2">Small ribosomal subunit protein uS12</fullName>
    </recommendedName>
    <alternativeName>
        <fullName evidence="3">30S ribosomal protein S12</fullName>
    </alternativeName>
</protein>
<dbReference type="EMBL" id="CP000250">
    <property type="protein sequence ID" value="ABD06995.1"/>
    <property type="molecule type" value="Genomic_DNA"/>
</dbReference>
<dbReference type="RefSeq" id="WP_011441182.1">
    <property type="nucleotide sequence ID" value="NC_007778.1"/>
</dbReference>
<dbReference type="SMR" id="Q2IXR5"/>
<dbReference type="STRING" id="316058.RPB_2290"/>
<dbReference type="KEGG" id="rpb:RPB_2290"/>
<dbReference type="eggNOG" id="COG0048">
    <property type="taxonomic scope" value="Bacteria"/>
</dbReference>
<dbReference type="HOGENOM" id="CLU_104295_1_2_5"/>
<dbReference type="OrthoDB" id="9802366at2"/>
<dbReference type="Proteomes" id="UP000008809">
    <property type="component" value="Chromosome"/>
</dbReference>
<dbReference type="GO" id="GO:0015935">
    <property type="term" value="C:small ribosomal subunit"/>
    <property type="evidence" value="ECO:0007669"/>
    <property type="project" value="InterPro"/>
</dbReference>
<dbReference type="GO" id="GO:0019843">
    <property type="term" value="F:rRNA binding"/>
    <property type="evidence" value="ECO:0007669"/>
    <property type="project" value="UniProtKB-UniRule"/>
</dbReference>
<dbReference type="GO" id="GO:0003735">
    <property type="term" value="F:structural constituent of ribosome"/>
    <property type="evidence" value="ECO:0007669"/>
    <property type="project" value="InterPro"/>
</dbReference>
<dbReference type="GO" id="GO:0000049">
    <property type="term" value="F:tRNA binding"/>
    <property type="evidence" value="ECO:0007669"/>
    <property type="project" value="UniProtKB-UniRule"/>
</dbReference>
<dbReference type="GO" id="GO:0006412">
    <property type="term" value="P:translation"/>
    <property type="evidence" value="ECO:0007669"/>
    <property type="project" value="UniProtKB-UniRule"/>
</dbReference>
<dbReference type="CDD" id="cd03368">
    <property type="entry name" value="Ribosomal_S12"/>
    <property type="match status" value="1"/>
</dbReference>
<dbReference type="FunFam" id="2.40.50.140:FF:000001">
    <property type="entry name" value="30S ribosomal protein S12"/>
    <property type="match status" value="1"/>
</dbReference>
<dbReference type="Gene3D" id="2.40.50.140">
    <property type="entry name" value="Nucleic acid-binding proteins"/>
    <property type="match status" value="1"/>
</dbReference>
<dbReference type="HAMAP" id="MF_00403_B">
    <property type="entry name" value="Ribosomal_uS12_B"/>
    <property type="match status" value="1"/>
</dbReference>
<dbReference type="InterPro" id="IPR012340">
    <property type="entry name" value="NA-bd_OB-fold"/>
</dbReference>
<dbReference type="InterPro" id="IPR006032">
    <property type="entry name" value="Ribosomal_uS12"/>
</dbReference>
<dbReference type="InterPro" id="IPR005679">
    <property type="entry name" value="Ribosomal_uS12_bac"/>
</dbReference>
<dbReference type="NCBIfam" id="TIGR00981">
    <property type="entry name" value="rpsL_bact"/>
    <property type="match status" value="1"/>
</dbReference>
<dbReference type="PANTHER" id="PTHR11652">
    <property type="entry name" value="30S RIBOSOMAL PROTEIN S12 FAMILY MEMBER"/>
    <property type="match status" value="1"/>
</dbReference>
<dbReference type="Pfam" id="PF00164">
    <property type="entry name" value="Ribosom_S12_S23"/>
    <property type="match status" value="1"/>
</dbReference>
<dbReference type="PIRSF" id="PIRSF002133">
    <property type="entry name" value="Ribosomal_S12/S23"/>
    <property type="match status" value="1"/>
</dbReference>
<dbReference type="PRINTS" id="PR01034">
    <property type="entry name" value="RIBOSOMALS12"/>
</dbReference>
<dbReference type="SUPFAM" id="SSF50249">
    <property type="entry name" value="Nucleic acid-binding proteins"/>
    <property type="match status" value="1"/>
</dbReference>
<dbReference type="PROSITE" id="PS00055">
    <property type="entry name" value="RIBOSOMAL_S12"/>
    <property type="match status" value="1"/>
</dbReference>
<keyword id="KW-0488">Methylation</keyword>
<keyword id="KW-1185">Reference proteome</keyword>
<keyword id="KW-0687">Ribonucleoprotein</keyword>
<keyword id="KW-0689">Ribosomal protein</keyword>
<keyword id="KW-0694">RNA-binding</keyword>
<keyword id="KW-0699">rRNA-binding</keyword>
<keyword id="KW-0820">tRNA-binding</keyword>
<reference key="1">
    <citation type="submission" date="2006-01" db="EMBL/GenBank/DDBJ databases">
        <title>Complete sequence of Rhodopseudomonas palustris HaA2.</title>
        <authorList>
            <consortium name="US DOE Joint Genome Institute"/>
            <person name="Copeland A."/>
            <person name="Lucas S."/>
            <person name="Lapidus A."/>
            <person name="Barry K."/>
            <person name="Detter J.C."/>
            <person name="Glavina T."/>
            <person name="Hammon N."/>
            <person name="Israni S."/>
            <person name="Pitluck S."/>
            <person name="Chain P."/>
            <person name="Malfatti S."/>
            <person name="Shin M."/>
            <person name="Vergez L."/>
            <person name="Schmutz J."/>
            <person name="Larimer F."/>
            <person name="Land M."/>
            <person name="Hauser L."/>
            <person name="Pelletier D.A."/>
            <person name="Kyrpides N."/>
            <person name="Anderson I."/>
            <person name="Oda Y."/>
            <person name="Harwood C.S."/>
            <person name="Richardson P."/>
        </authorList>
    </citation>
    <scope>NUCLEOTIDE SEQUENCE [LARGE SCALE GENOMIC DNA]</scope>
    <source>
        <strain>HaA2</strain>
    </source>
</reference>
<name>RS12_RHOP2</name>
<sequence>MPTINQLIARPRVVQKSRKKVPALQQSPQKRGVCTRVYTTTPKKPNSALRKVAKVRLTNGFEVIGYIPGEGHNLQEHSVVMIRGGRVKDLPGVRYHILRGVLDTQGVKNRKQRRSKYGAKRPK</sequence>
<proteinExistence type="inferred from homology"/>